<protein>
    <recommendedName>
        <fullName evidence="1">Probable septum site-determining protein MinC</fullName>
    </recommendedName>
</protein>
<name>MINC_ECOL5</name>
<accession>Q0TIK0</accession>
<feature type="chain" id="PRO_1000047828" description="Probable septum site-determining protein MinC">
    <location>
        <begin position="1"/>
        <end position="231"/>
    </location>
</feature>
<feature type="region of interest" description="Disordered" evidence="2">
    <location>
        <begin position="102"/>
        <end position="125"/>
    </location>
</feature>
<evidence type="ECO:0000255" key="1">
    <source>
        <dbReference type="HAMAP-Rule" id="MF_00267"/>
    </source>
</evidence>
<evidence type="ECO:0000256" key="2">
    <source>
        <dbReference type="SAM" id="MobiDB-lite"/>
    </source>
</evidence>
<sequence length="231" mass="24701">MSNTPIELKGSSFTLSVVHLHEAEPKVIHQALEDKIAQAPAFLKHAPVVLNVSALEAPVNWSAMHKAVSATGLRVIGVSGCKDAQLKAEIEKMGLPILTEGKEKAPRPAPAPQAPAQNTTPVTKTRLIDTPVRSGQRIYAPQCDLIVTSHVSAGAELIADGNIHVYGMMRGRALAGASGDRETQIFCTNLMAELVSIAGEYWLSDQIPAEFYGKAARLQLVENALTVQPLN</sequence>
<organism>
    <name type="scientific">Escherichia coli O6:K15:H31 (strain 536 / UPEC)</name>
    <dbReference type="NCBI Taxonomy" id="362663"/>
    <lineage>
        <taxon>Bacteria</taxon>
        <taxon>Pseudomonadati</taxon>
        <taxon>Pseudomonadota</taxon>
        <taxon>Gammaproteobacteria</taxon>
        <taxon>Enterobacterales</taxon>
        <taxon>Enterobacteriaceae</taxon>
        <taxon>Escherichia</taxon>
    </lineage>
</organism>
<comment type="function">
    <text evidence="1">Cell division inhibitor that blocks the formation of polar Z ring septums. Rapidly oscillates between the poles of the cell to destabilize FtsZ filaments that have formed before they mature into polar Z rings. Prevents FtsZ polymerization.</text>
</comment>
<comment type="subunit">
    <text evidence="1">Interacts with MinD and FtsZ.</text>
</comment>
<comment type="similarity">
    <text evidence="1">Belongs to the MinC family.</text>
</comment>
<gene>
    <name evidence="1" type="primary">minC</name>
    <name type="ordered locus">ECP_1218</name>
</gene>
<dbReference type="EMBL" id="CP000247">
    <property type="protein sequence ID" value="ABG69229.1"/>
    <property type="molecule type" value="Genomic_DNA"/>
</dbReference>
<dbReference type="RefSeq" id="WP_000072533.1">
    <property type="nucleotide sequence ID" value="NC_008253.1"/>
</dbReference>
<dbReference type="SMR" id="Q0TIK0"/>
<dbReference type="KEGG" id="ecp:ECP_1218"/>
<dbReference type="HOGENOM" id="CLU_067812_0_1_6"/>
<dbReference type="Proteomes" id="UP000009182">
    <property type="component" value="Chromosome"/>
</dbReference>
<dbReference type="GO" id="GO:0000902">
    <property type="term" value="P:cell morphogenesis"/>
    <property type="evidence" value="ECO:0007669"/>
    <property type="project" value="InterPro"/>
</dbReference>
<dbReference type="GO" id="GO:0000917">
    <property type="term" value="P:division septum assembly"/>
    <property type="evidence" value="ECO:0007669"/>
    <property type="project" value="UniProtKB-KW"/>
</dbReference>
<dbReference type="GO" id="GO:0051302">
    <property type="term" value="P:regulation of cell division"/>
    <property type="evidence" value="ECO:0007669"/>
    <property type="project" value="InterPro"/>
</dbReference>
<dbReference type="GO" id="GO:1901891">
    <property type="term" value="P:regulation of cell septum assembly"/>
    <property type="evidence" value="ECO:0007669"/>
    <property type="project" value="InterPro"/>
</dbReference>
<dbReference type="FunFam" id="2.160.20.70:FF:000002">
    <property type="entry name" value="Probable septum site-determining protein MinC"/>
    <property type="match status" value="1"/>
</dbReference>
<dbReference type="Gene3D" id="2.160.20.70">
    <property type="match status" value="1"/>
</dbReference>
<dbReference type="Gene3D" id="3.30.70.260">
    <property type="match status" value="1"/>
</dbReference>
<dbReference type="HAMAP" id="MF_00267">
    <property type="entry name" value="MinC"/>
    <property type="match status" value="1"/>
</dbReference>
<dbReference type="InterPro" id="IPR016098">
    <property type="entry name" value="CAP/MinC_C"/>
</dbReference>
<dbReference type="InterPro" id="IPR013033">
    <property type="entry name" value="MinC"/>
</dbReference>
<dbReference type="InterPro" id="IPR036145">
    <property type="entry name" value="MinC_C_sf"/>
</dbReference>
<dbReference type="InterPro" id="IPR007874">
    <property type="entry name" value="MinC_N"/>
</dbReference>
<dbReference type="InterPro" id="IPR005526">
    <property type="entry name" value="Septum_form_inhib_MinC_C"/>
</dbReference>
<dbReference type="NCBIfam" id="TIGR01222">
    <property type="entry name" value="minC"/>
    <property type="match status" value="1"/>
</dbReference>
<dbReference type="PANTHER" id="PTHR34108">
    <property type="entry name" value="SEPTUM SITE-DETERMINING PROTEIN MINC"/>
    <property type="match status" value="1"/>
</dbReference>
<dbReference type="PANTHER" id="PTHR34108:SF1">
    <property type="entry name" value="SEPTUM SITE-DETERMINING PROTEIN MINC"/>
    <property type="match status" value="1"/>
</dbReference>
<dbReference type="Pfam" id="PF03775">
    <property type="entry name" value="MinC_C"/>
    <property type="match status" value="1"/>
</dbReference>
<dbReference type="Pfam" id="PF05209">
    <property type="entry name" value="MinC_N"/>
    <property type="match status" value="1"/>
</dbReference>
<dbReference type="SUPFAM" id="SSF63848">
    <property type="entry name" value="Cell-division inhibitor MinC, C-terminal domain"/>
    <property type="match status" value="1"/>
</dbReference>
<proteinExistence type="inferred from homology"/>
<keyword id="KW-0131">Cell cycle</keyword>
<keyword id="KW-0132">Cell division</keyword>
<keyword id="KW-0717">Septation</keyword>
<reference key="1">
    <citation type="journal article" date="2006" name="Mol. Microbiol.">
        <title>Role of pathogenicity island-associated integrases in the genome plasticity of uropathogenic Escherichia coli strain 536.</title>
        <authorList>
            <person name="Hochhut B."/>
            <person name="Wilde C."/>
            <person name="Balling G."/>
            <person name="Middendorf B."/>
            <person name="Dobrindt U."/>
            <person name="Brzuszkiewicz E."/>
            <person name="Gottschalk G."/>
            <person name="Carniel E."/>
            <person name="Hacker J."/>
        </authorList>
    </citation>
    <scope>NUCLEOTIDE SEQUENCE [LARGE SCALE GENOMIC DNA]</scope>
    <source>
        <strain>536 / UPEC</strain>
    </source>
</reference>